<evidence type="ECO:0000255" key="1">
    <source>
        <dbReference type="HAMAP-Rule" id="MF_00444"/>
    </source>
</evidence>
<protein>
    <recommendedName>
        <fullName evidence="1">ATP-dependent Clp protease proteolytic subunit</fullName>
        <ecNumber evidence="1">3.4.21.92</ecNumber>
    </recommendedName>
    <alternativeName>
        <fullName evidence="1">Endopeptidase Clp</fullName>
    </alternativeName>
</protein>
<reference key="1">
    <citation type="submission" date="2009-06" db="EMBL/GenBank/DDBJ databases">
        <title>Complete sequence of chromosome of Geopacillus sp. WCH70.</title>
        <authorList>
            <consortium name="US DOE Joint Genome Institute"/>
            <person name="Lucas S."/>
            <person name="Copeland A."/>
            <person name="Lapidus A."/>
            <person name="Glavina del Rio T."/>
            <person name="Dalin E."/>
            <person name="Tice H."/>
            <person name="Bruce D."/>
            <person name="Goodwin L."/>
            <person name="Pitluck S."/>
            <person name="Chertkov O."/>
            <person name="Brettin T."/>
            <person name="Detter J.C."/>
            <person name="Han C."/>
            <person name="Larimer F."/>
            <person name="Land M."/>
            <person name="Hauser L."/>
            <person name="Kyrpides N."/>
            <person name="Mikhailova N."/>
            <person name="Brumm P."/>
            <person name="Mead D.A."/>
            <person name="Richardson P."/>
        </authorList>
    </citation>
    <scope>NUCLEOTIDE SEQUENCE [LARGE SCALE GENOMIC DNA]</scope>
    <source>
        <strain>WCH70</strain>
    </source>
</reference>
<feature type="chain" id="PRO_1000206154" description="ATP-dependent Clp protease proteolytic subunit">
    <location>
        <begin position="1"/>
        <end position="196"/>
    </location>
</feature>
<feature type="active site" description="Nucleophile" evidence="1">
    <location>
        <position position="98"/>
    </location>
</feature>
<feature type="active site" evidence="1">
    <location>
        <position position="123"/>
    </location>
</feature>
<comment type="function">
    <text evidence="1">Cleaves peptides in various proteins in a process that requires ATP hydrolysis. Has a chymotrypsin-like activity. Plays a major role in the degradation of misfolded proteins.</text>
</comment>
<comment type="catalytic activity">
    <reaction evidence="1">
        <text>Hydrolysis of proteins to small peptides in the presence of ATP and magnesium. alpha-casein is the usual test substrate. In the absence of ATP, only oligopeptides shorter than five residues are hydrolyzed (such as succinyl-Leu-Tyr-|-NHMec, and Leu-Tyr-Leu-|-Tyr-Trp, in which cleavage of the -Tyr-|-Leu- and -Tyr-|-Trp bonds also occurs).</text>
        <dbReference type="EC" id="3.4.21.92"/>
    </reaction>
</comment>
<comment type="subunit">
    <text evidence="1">Fourteen ClpP subunits assemble into 2 heptameric rings which stack back to back to give a disk-like structure with a central cavity, resembling the structure of eukaryotic proteasomes.</text>
</comment>
<comment type="subcellular location">
    <subcellularLocation>
        <location evidence="1">Cytoplasm</location>
    </subcellularLocation>
</comment>
<comment type="similarity">
    <text evidence="1">Belongs to the peptidase S14 family.</text>
</comment>
<dbReference type="EC" id="3.4.21.92" evidence="1"/>
<dbReference type="EMBL" id="CP001638">
    <property type="protein sequence ID" value="ACS25639.1"/>
    <property type="molecule type" value="Genomic_DNA"/>
</dbReference>
<dbReference type="SMR" id="C5D7M9"/>
<dbReference type="STRING" id="471223.GWCH70_2966"/>
<dbReference type="MEROPS" id="S14.001"/>
<dbReference type="KEGG" id="gwc:GWCH70_2966"/>
<dbReference type="eggNOG" id="COG0740">
    <property type="taxonomic scope" value="Bacteria"/>
</dbReference>
<dbReference type="HOGENOM" id="CLU_058707_3_2_9"/>
<dbReference type="OrthoDB" id="9802800at2"/>
<dbReference type="GO" id="GO:0005737">
    <property type="term" value="C:cytoplasm"/>
    <property type="evidence" value="ECO:0007669"/>
    <property type="project" value="UniProtKB-SubCell"/>
</dbReference>
<dbReference type="GO" id="GO:0009368">
    <property type="term" value="C:endopeptidase Clp complex"/>
    <property type="evidence" value="ECO:0007669"/>
    <property type="project" value="TreeGrafter"/>
</dbReference>
<dbReference type="GO" id="GO:0004176">
    <property type="term" value="F:ATP-dependent peptidase activity"/>
    <property type="evidence" value="ECO:0007669"/>
    <property type="project" value="InterPro"/>
</dbReference>
<dbReference type="GO" id="GO:0051117">
    <property type="term" value="F:ATPase binding"/>
    <property type="evidence" value="ECO:0007669"/>
    <property type="project" value="TreeGrafter"/>
</dbReference>
<dbReference type="GO" id="GO:0004252">
    <property type="term" value="F:serine-type endopeptidase activity"/>
    <property type="evidence" value="ECO:0007669"/>
    <property type="project" value="UniProtKB-UniRule"/>
</dbReference>
<dbReference type="GO" id="GO:0006515">
    <property type="term" value="P:protein quality control for misfolded or incompletely synthesized proteins"/>
    <property type="evidence" value="ECO:0007669"/>
    <property type="project" value="TreeGrafter"/>
</dbReference>
<dbReference type="CDD" id="cd07017">
    <property type="entry name" value="S14_ClpP_2"/>
    <property type="match status" value="1"/>
</dbReference>
<dbReference type="FunFam" id="3.90.226.10:FF:000001">
    <property type="entry name" value="ATP-dependent Clp protease proteolytic subunit"/>
    <property type="match status" value="1"/>
</dbReference>
<dbReference type="Gene3D" id="3.90.226.10">
    <property type="entry name" value="2-enoyl-CoA Hydratase, Chain A, domain 1"/>
    <property type="match status" value="1"/>
</dbReference>
<dbReference type="HAMAP" id="MF_00444">
    <property type="entry name" value="ClpP"/>
    <property type="match status" value="1"/>
</dbReference>
<dbReference type="InterPro" id="IPR001907">
    <property type="entry name" value="ClpP"/>
</dbReference>
<dbReference type="InterPro" id="IPR029045">
    <property type="entry name" value="ClpP/crotonase-like_dom_sf"/>
</dbReference>
<dbReference type="InterPro" id="IPR023562">
    <property type="entry name" value="ClpP/TepA"/>
</dbReference>
<dbReference type="InterPro" id="IPR033135">
    <property type="entry name" value="ClpP_His_AS"/>
</dbReference>
<dbReference type="InterPro" id="IPR018215">
    <property type="entry name" value="ClpP_Ser_AS"/>
</dbReference>
<dbReference type="NCBIfam" id="TIGR00493">
    <property type="entry name" value="clpP"/>
    <property type="match status" value="1"/>
</dbReference>
<dbReference type="NCBIfam" id="NF001368">
    <property type="entry name" value="PRK00277.1"/>
    <property type="match status" value="1"/>
</dbReference>
<dbReference type="NCBIfam" id="NF009205">
    <property type="entry name" value="PRK12553.1"/>
    <property type="match status" value="1"/>
</dbReference>
<dbReference type="PANTHER" id="PTHR10381">
    <property type="entry name" value="ATP-DEPENDENT CLP PROTEASE PROTEOLYTIC SUBUNIT"/>
    <property type="match status" value="1"/>
</dbReference>
<dbReference type="PANTHER" id="PTHR10381:SF70">
    <property type="entry name" value="ATP-DEPENDENT CLP PROTEASE PROTEOLYTIC SUBUNIT"/>
    <property type="match status" value="1"/>
</dbReference>
<dbReference type="Pfam" id="PF00574">
    <property type="entry name" value="CLP_protease"/>
    <property type="match status" value="1"/>
</dbReference>
<dbReference type="PRINTS" id="PR00127">
    <property type="entry name" value="CLPPROTEASEP"/>
</dbReference>
<dbReference type="SUPFAM" id="SSF52096">
    <property type="entry name" value="ClpP/crotonase"/>
    <property type="match status" value="1"/>
</dbReference>
<dbReference type="PROSITE" id="PS00382">
    <property type="entry name" value="CLP_PROTEASE_HIS"/>
    <property type="match status" value="1"/>
</dbReference>
<dbReference type="PROSITE" id="PS00381">
    <property type="entry name" value="CLP_PROTEASE_SER"/>
    <property type="match status" value="1"/>
</dbReference>
<sequence>MNLIPTVIEQTSRGERAYDIYSRLLKDRIIILGSPIDDQVANSIVSQLLFLAAEDPEKDISLYINSPGGSITAGLAIYDTMQFIKPDVSTICIGMAASMGAFLLAAGAKGKRFALPNSEIMIHQPLGGAQGQATEIEIAAKRILFLRDKLNRILAENTGQPVEVIERDTDRDNFMTAQKAQEYGIIDRVLTRIDEK</sequence>
<proteinExistence type="inferred from homology"/>
<organism>
    <name type="scientific">Geobacillus sp. (strain WCH70)</name>
    <dbReference type="NCBI Taxonomy" id="471223"/>
    <lineage>
        <taxon>Bacteria</taxon>
        <taxon>Bacillati</taxon>
        <taxon>Bacillota</taxon>
        <taxon>Bacilli</taxon>
        <taxon>Bacillales</taxon>
        <taxon>Anoxybacillaceae</taxon>
        <taxon>Geobacillus</taxon>
    </lineage>
</organism>
<accession>C5D7M9</accession>
<gene>
    <name evidence="1" type="primary">clpP</name>
    <name type="ordered locus">GWCH70_2966</name>
</gene>
<keyword id="KW-0963">Cytoplasm</keyword>
<keyword id="KW-0378">Hydrolase</keyword>
<keyword id="KW-0645">Protease</keyword>
<keyword id="KW-0720">Serine protease</keyword>
<name>CLPP_GEOSW</name>